<keyword id="KW-0687">Ribonucleoprotein</keyword>
<keyword id="KW-0689">Ribosomal protein</keyword>
<comment type="function">
    <text evidence="1">Involved in the binding of tRNA to the ribosomes.</text>
</comment>
<comment type="subunit">
    <text evidence="1">Part of the 30S ribosomal subunit.</text>
</comment>
<comment type="similarity">
    <text evidence="1">Belongs to the universal ribosomal protein uS10 family.</text>
</comment>
<comment type="sequence caution" evidence="2">
    <conflict type="erroneous initiation">
        <sequence resource="EMBL-CDS" id="CAG69904"/>
    </conflict>
</comment>
<name>RS10_ACIAD</name>
<feature type="chain" id="PRO_0000146484" description="Small ribosomal subunit protein uS10">
    <location>
        <begin position="1"/>
        <end position="103"/>
    </location>
</feature>
<dbReference type="EMBL" id="CR543861">
    <property type="protein sequence ID" value="CAG69904.1"/>
    <property type="status" value="ALT_INIT"/>
    <property type="molecule type" value="Genomic_DNA"/>
</dbReference>
<dbReference type="RefSeq" id="WP_004725677.1">
    <property type="nucleotide sequence ID" value="NC_005966.1"/>
</dbReference>
<dbReference type="SMR" id="Q6F7R1"/>
<dbReference type="STRING" id="202950.GCA_001485005_02935"/>
<dbReference type="GeneID" id="84211226"/>
<dbReference type="KEGG" id="aci:ACIAD3220"/>
<dbReference type="eggNOG" id="COG0051">
    <property type="taxonomic scope" value="Bacteria"/>
</dbReference>
<dbReference type="HOGENOM" id="CLU_122625_1_3_6"/>
<dbReference type="OrthoDB" id="9804464at2"/>
<dbReference type="BioCyc" id="ASP62977:ACIAD_RS14600-MONOMER"/>
<dbReference type="Proteomes" id="UP000000430">
    <property type="component" value="Chromosome"/>
</dbReference>
<dbReference type="GO" id="GO:1990904">
    <property type="term" value="C:ribonucleoprotein complex"/>
    <property type="evidence" value="ECO:0007669"/>
    <property type="project" value="UniProtKB-KW"/>
</dbReference>
<dbReference type="GO" id="GO:0005840">
    <property type="term" value="C:ribosome"/>
    <property type="evidence" value="ECO:0007669"/>
    <property type="project" value="UniProtKB-KW"/>
</dbReference>
<dbReference type="GO" id="GO:0003735">
    <property type="term" value="F:structural constituent of ribosome"/>
    <property type="evidence" value="ECO:0007669"/>
    <property type="project" value="InterPro"/>
</dbReference>
<dbReference type="GO" id="GO:0000049">
    <property type="term" value="F:tRNA binding"/>
    <property type="evidence" value="ECO:0007669"/>
    <property type="project" value="UniProtKB-UniRule"/>
</dbReference>
<dbReference type="GO" id="GO:0006412">
    <property type="term" value="P:translation"/>
    <property type="evidence" value="ECO:0007669"/>
    <property type="project" value="UniProtKB-UniRule"/>
</dbReference>
<dbReference type="FunFam" id="3.30.70.600:FF:000001">
    <property type="entry name" value="30S ribosomal protein S10"/>
    <property type="match status" value="1"/>
</dbReference>
<dbReference type="Gene3D" id="3.30.70.600">
    <property type="entry name" value="Ribosomal protein S10 domain"/>
    <property type="match status" value="1"/>
</dbReference>
<dbReference type="HAMAP" id="MF_00508">
    <property type="entry name" value="Ribosomal_uS10"/>
    <property type="match status" value="1"/>
</dbReference>
<dbReference type="InterPro" id="IPR001848">
    <property type="entry name" value="Ribosomal_uS10"/>
</dbReference>
<dbReference type="InterPro" id="IPR018268">
    <property type="entry name" value="Ribosomal_uS10_CS"/>
</dbReference>
<dbReference type="InterPro" id="IPR027486">
    <property type="entry name" value="Ribosomal_uS10_dom"/>
</dbReference>
<dbReference type="InterPro" id="IPR036838">
    <property type="entry name" value="Ribosomal_uS10_dom_sf"/>
</dbReference>
<dbReference type="NCBIfam" id="NF001861">
    <property type="entry name" value="PRK00596.1"/>
    <property type="match status" value="1"/>
</dbReference>
<dbReference type="NCBIfam" id="TIGR01049">
    <property type="entry name" value="rpsJ_bact"/>
    <property type="match status" value="1"/>
</dbReference>
<dbReference type="PANTHER" id="PTHR11700">
    <property type="entry name" value="30S RIBOSOMAL PROTEIN S10 FAMILY MEMBER"/>
    <property type="match status" value="1"/>
</dbReference>
<dbReference type="Pfam" id="PF00338">
    <property type="entry name" value="Ribosomal_S10"/>
    <property type="match status" value="1"/>
</dbReference>
<dbReference type="PRINTS" id="PR00971">
    <property type="entry name" value="RIBOSOMALS10"/>
</dbReference>
<dbReference type="SMART" id="SM01403">
    <property type="entry name" value="Ribosomal_S10"/>
    <property type="match status" value="1"/>
</dbReference>
<dbReference type="SUPFAM" id="SSF54999">
    <property type="entry name" value="Ribosomal protein S10"/>
    <property type="match status" value="1"/>
</dbReference>
<dbReference type="PROSITE" id="PS00361">
    <property type="entry name" value="RIBOSOMAL_S10"/>
    <property type="match status" value="1"/>
</dbReference>
<gene>
    <name evidence="1" type="primary">rpsJ</name>
    <name type="ordered locus">ACIAD3220</name>
</gene>
<proteinExistence type="inferred from homology"/>
<organism>
    <name type="scientific">Acinetobacter baylyi (strain ATCC 33305 / BD413 / ADP1)</name>
    <dbReference type="NCBI Taxonomy" id="62977"/>
    <lineage>
        <taxon>Bacteria</taxon>
        <taxon>Pseudomonadati</taxon>
        <taxon>Pseudomonadota</taxon>
        <taxon>Gammaproteobacteria</taxon>
        <taxon>Moraxellales</taxon>
        <taxon>Moraxellaceae</taxon>
        <taxon>Acinetobacter</taxon>
    </lineage>
</organism>
<protein>
    <recommendedName>
        <fullName evidence="1">Small ribosomal subunit protein uS10</fullName>
    </recommendedName>
    <alternativeName>
        <fullName evidence="2">30S ribosomal protein S10</fullName>
    </alternativeName>
</protein>
<accession>Q6F7R1</accession>
<reference key="1">
    <citation type="journal article" date="2004" name="Nucleic Acids Res.">
        <title>Unique features revealed by the genome sequence of Acinetobacter sp. ADP1, a versatile and naturally transformation competent bacterium.</title>
        <authorList>
            <person name="Barbe V."/>
            <person name="Vallenet D."/>
            <person name="Fonknechten N."/>
            <person name="Kreimeyer A."/>
            <person name="Oztas S."/>
            <person name="Labarre L."/>
            <person name="Cruveiller S."/>
            <person name="Robert C."/>
            <person name="Duprat S."/>
            <person name="Wincker P."/>
            <person name="Ornston L.N."/>
            <person name="Weissenbach J."/>
            <person name="Marliere P."/>
            <person name="Cohen G.N."/>
            <person name="Medigue C."/>
        </authorList>
    </citation>
    <scope>NUCLEOTIDE SEQUENCE [LARGE SCALE GENOMIC DNA]</scope>
    <source>
        <strain>ATCC 33305 / BD413 / ADP1</strain>
    </source>
</reference>
<evidence type="ECO:0000255" key="1">
    <source>
        <dbReference type="HAMAP-Rule" id="MF_00508"/>
    </source>
</evidence>
<evidence type="ECO:0000305" key="2"/>
<sequence>MSNQRIRIRLKSFDHRLIDQSSQEIVETAKRTGAQVCGPIPMPTRIERFNVLTSPHVNKDARDQYEIRTYKRLIDIVQPTDKTVDALMKLDLAAGVDVQIALG</sequence>